<keyword id="KW-0150">Chloroplast</keyword>
<keyword id="KW-0456">Lyase</keyword>
<keyword id="KW-0460">Magnesium</keyword>
<keyword id="KW-0479">Metal-binding</keyword>
<keyword id="KW-0934">Plastid</keyword>
<keyword id="KW-0809">Transit peptide</keyword>
<comment type="function">
    <text evidence="3">Involved in the biosynthesis of ent-kaurene diterpenoids natural products such as oridonin, miltiradiene, eriocalyxin B and nezukol, known to exhibit antitumor, anti-inflammatory and antibacterial activities (PubMed:28381502). Catalyzes the conversion of (+)-copalyl diphosphate ((+)-CPP) to isopimaradiene (PubMed:28381502).</text>
</comment>
<comment type="catalytic activity">
    <reaction evidence="3">
        <text>(+)-copalyl diphosphate = isopimara-8(14),15-diene + diphosphate</text>
        <dbReference type="Rhea" id="RHEA:32003"/>
        <dbReference type="ChEBI" id="CHEBI:33019"/>
        <dbReference type="ChEBI" id="CHEBI:58635"/>
        <dbReference type="ChEBI" id="CHEBI:63708"/>
    </reaction>
    <physiologicalReaction direction="left-to-right" evidence="3">
        <dbReference type="Rhea" id="RHEA:32004"/>
    </physiologicalReaction>
</comment>
<comment type="cofactor">
    <cofactor evidence="1">
        <name>Mg(2+)</name>
        <dbReference type="ChEBI" id="CHEBI:18420"/>
    </cofactor>
    <text evidence="1">Binds 3 Mg(2+) ions per subunit.</text>
</comment>
<comment type="pathway">
    <text evidence="3">Secondary metabolite biosynthesis; terpenoid biosynthesis.</text>
</comment>
<comment type="subcellular location">
    <subcellularLocation>
        <location evidence="2">Plastid</location>
        <location evidence="2">Chloroplast</location>
    </subcellularLocation>
</comment>
<comment type="tissue specificity">
    <text evidence="3">Ubiquitous expression in roots, stems, leaves and flowers.</text>
</comment>
<comment type="domain">
    <text evidence="5">The Asp-Asp-Xaa-Xaa-Asp/Glu (DDXXD/E) motif is important for the catalytic activity, presumably through binding to Mg(2+).</text>
</comment>
<comment type="miscellaneous">
    <text evidence="3">Abietane diterpenoids (e.g. miltiradiene, abietatriene and ferruginol) accumulate specifically in the periderm of roots (PubMed:28381502). The ent-kaurene diterpenoid oridonin, main constituent of Isodon rubescens, accumulates in leaves (PubMed:28381502).</text>
</comment>
<comment type="similarity">
    <text evidence="5">Belongs to the terpene synthase family.</text>
</comment>
<sequence>MFSSSLKLKTNPLMDNKIHRSSSDRDFRGSTISSVKCSLNNSEDLIVKVRERVKGKVEISPSAYDTAWVAMVPERDYSGQKPRFPECLDWIVENQNADGSWGVQSSSMLKHSLSCTLACLLPLRKWNVASPQLLRNGVEFIRSSSSAATDKNQISPIGFDIVFPMMIQYANDLNLELLLNQDLVNILFQNREAQLTRNKNLEYVAEGLGSSIDWNKVLMHQRSNGSLFNSPATTAAALIHRHDKKCLEYLNSLLSIYKTWVPTIHPMDVYARLCLVDHLQGLGVDRFVHPEIEVVLQETFRLWQQKDDKIFTDATCRAMAFRLLRMQGYHVTPDELGGYVDEESFFATVSFESSGTDTVLELYKASQVRLPEDDDTLEKLHDWTSKFLKQKLQSKTILDQQLERKVEFNLKNYHGILDAVKHRRNFDLYDIDHRRILKTAYRCPTVYNEDILLLTAQDLMTRQVQNQKELQIMERWLEDCRLDKVSGRNAVLVSYFLNANNFPDPRLSEARLAYAKTVTLITFLDDFFDHHGSREDSLLIMELINKWTEPLTVSYPSDEVEILYSALHATITDTAEKVYAVQGRCIKSLIIELWMEVLTAMLGEMDSCNADTPPDFDEYMAFAPKSLGCSLSILPSLHLMGETISEEMVTSLECFELDKHVSIAIRLLNDQQTFERERKERTTNSVTLLMDADQISEEEAVSRIQKLIEHHTKELLKLVVQKEGSVLPRKCKDIFWNTIKVGYCLYRFSDEFTSPQQMKEDMKLLFHDPVLKTTP</sequence>
<organism>
    <name type="scientific">Isodon rubescens</name>
    <name type="common">Rabdosia rubescens</name>
    <dbReference type="NCBI Taxonomy" id="587669"/>
    <lineage>
        <taxon>Eukaryota</taxon>
        <taxon>Viridiplantae</taxon>
        <taxon>Streptophyta</taxon>
        <taxon>Embryophyta</taxon>
        <taxon>Tracheophyta</taxon>
        <taxon>Spermatophyta</taxon>
        <taxon>Magnoliopsida</taxon>
        <taxon>eudicotyledons</taxon>
        <taxon>Gunneridae</taxon>
        <taxon>Pentapetalae</taxon>
        <taxon>asterids</taxon>
        <taxon>lamiids</taxon>
        <taxon>Lamiales</taxon>
        <taxon>Lamiaceae</taxon>
        <taxon>Nepetoideae</taxon>
        <taxon>Ocimeae</taxon>
        <taxon>Isodoninae</taxon>
        <taxon>Isodon</taxon>
    </lineage>
</organism>
<reference key="1">
    <citation type="journal article" date="2017" name="Plant Physiol.">
        <title>Functional diversification of kaurene synthase-like genes in Isodon rubescens.</title>
        <authorList>
            <person name="Jin B."/>
            <person name="Cui G."/>
            <person name="Guo J."/>
            <person name="Tang J."/>
            <person name="Duan L."/>
            <person name="Lin H."/>
            <person name="Shen Y."/>
            <person name="Chen T."/>
            <person name="Zhang H."/>
            <person name="Huang L."/>
        </authorList>
    </citation>
    <scope>NUCLEOTIDE SEQUENCE [MRNA]</scope>
    <scope>FUNCTION</scope>
    <scope>PATHWAY</scope>
    <scope>CATALYTIC ACTIVITY</scope>
    <scope>TISSUE SPECIFICITY</scope>
</reference>
<protein>
    <recommendedName>
        <fullName evidence="5">Isopimaradiene synthase</fullName>
        <ecNumber evidence="3">4.2.3.-</ecNumber>
    </recommendedName>
    <alternativeName>
        <fullName evidence="4">Kaurene synthase 6</fullName>
        <shortName evidence="4">IrKSL6</shortName>
    </alternativeName>
</protein>
<evidence type="ECO:0000250" key="1">
    <source>
        <dbReference type="UniProtKB" id="Q40577"/>
    </source>
</evidence>
<evidence type="ECO:0000255" key="2"/>
<evidence type="ECO:0000269" key="3">
    <source>
    </source>
</evidence>
<evidence type="ECO:0000303" key="4">
    <source>
    </source>
</evidence>
<evidence type="ECO:0000305" key="5"/>
<gene>
    <name evidence="4" type="primary">KSL6</name>
</gene>
<proteinExistence type="evidence at protein level"/>
<accession>A0A1Z3GCD1</accession>
<feature type="transit peptide" description="Chloroplast" evidence="2">
    <location>
        <begin position="1"/>
        <end position="36"/>
    </location>
</feature>
<feature type="chain" id="PRO_0000452381" description="Isopimaradiene synthase">
    <location>
        <begin position="37"/>
        <end position="775"/>
    </location>
</feature>
<feature type="short sequence motif" description="DDXXD motif" evidence="5">
    <location>
        <begin position="525"/>
        <end position="529"/>
    </location>
</feature>
<feature type="binding site" evidence="1">
    <location>
        <position position="525"/>
    </location>
    <ligand>
        <name>Mg(2+)</name>
        <dbReference type="ChEBI" id="CHEBI:18420"/>
        <label>1</label>
    </ligand>
</feature>
<feature type="binding site" evidence="1">
    <location>
        <position position="525"/>
    </location>
    <ligand>
        <name>Mg(2+)</name>
        <dbReference type="ChEBI" id="CHEBI:18420"/>
        <label>2</label>
    </ligand>
</feature>
<feature type="binding site" evidence="1">
    <location>
        <position position="529"/>
    </location>
    <ligand>
        <name>Mg(2+)</name>
        <dbReference type="ChEBI" id="CHEBI:18420"/>
        <label>1</label>
    </ligand>
</feature>
<feature type="binding site" evidence="1">
    <location>
        <position position="529"/>
    </location>
    <ligand>
        <name>Mg(2+)</name>
        <dbReference type="ChEBI" id="CHEBI:18420"/>
        <label>2</label>
    </ligand>
</feature>
<feature type="binding site" evidence="1">
    <location>
        <position position="669"/>
    </location>
    <ligand>
        <name>Mg(2+)</name>
        <dbReference type="ChEBI" id="CHEBI:18420"/>
        <label>3</label>
    </ligand>
</feature>
<feature type="binding site" evidence="1">
    <location>
        <position position="672"/>
    </location>
    <ligand>
        <name>Mg(2+)</name>
        <dbReference type="ChEBI" id="CHEBI:18420"/>
        <label>3</label>
    </ligand>
</feature>
<feature type="binding site" evidence="1">
    <location>
        <position position="677"/>
    </location>
    <ligand>
        <name>Mg(2+)</name>
        <dbReference type="ChEBI" id="CHEBI:18420"/>
        <label>3</label>
    </ligand>
</feature>
<name>KSL6_ISORU</name>
<dbReference type="EC" id="4.2.3.-" evidence="3"/>
<dbReference type="EMBL" id="KX580635">
    <property type="protein sequence ID" value="ASC55318.1"/>
    <property type="molecule type" value="mRNA"/>
</dbReference>
<dbReference type="SMR" id="A0A1Z3GCD1"/>
<dbReference type="BRENDA" id="4.2.3.44">
    <property type="organism ID" value="15342"/>
</dbReference>
<dbReference type="UniPathway" id="UPA00213"/>
<dbReference type="GO" id="GO:0009507">
    <property type="term" value="C:chloroplast"/>
    <property type="evidence" value="ECO:0007669"/>
    <property type="project" value="UniProtKB-SubCell"/>
</dbReference>
<dbReference type="GO" id="GO:0000287">
    <property type="term" value="F:magnesium ion binding"/>
    <property type="evidence" value="ECO:0007669"/>
    <property type="project" value="InterPro"/>
</dbReference>
<dbReference type="GO" id="GO:0010333">
    <property type="term" value="F:terpene synthase activity"/>
    <property type="evidence" value="ECO:0007669"/>
    <property type="project" value="InterPro"/>
</dbReference>
<dbReference type="GO" id="GO:0009686">
    <property type="term" value="P:gibberellin biosynthetic process"/>
    <property type="evidence" value="ECO:0007669"/>
    <property type="project" value="TreeGrafter"/>
</dbReference>
<dbReference type="GO" id="GO:1901946">
    <property type="term" value="P:miltiradiene biosynthetic process"/>
    <property type="evidence" value="ECO:0000314"/>
    <property type="project" value="UniProtKB"/>
</dbReference>
<dbReference type="GO" id="GO:0016114">
    <property type="term" value="P:terpenoid biosynthetic process"/>
    <property type="evidence" value="ECO:0000314"/>
    <property type="project" value="UniProtKB"/>
</dbReference>
<dbReference type="FunFam" id="1.50.10.130:FF:000002">
    <property type="entry name" value="Ent-copalyl diphosphate synthase, chloroplastic"/>
    <property type="match status" value="1"/>
</dbReference>
<dbReference type="Gene3D" id="1.50.10.160">
    <property type="match status" value="1"/>
</dbReference>
<dbReference type="Gene3D" id="1.10.600.10">
    <property type="entry name" value="Farnesyl Diphosphate Synthase"/>
    <property type="match status" value="1"/>
</dbReference>
<dbReference type="Gene3D" id="1.50.10.130">
    <property type="entry name" value="Terpene synthase, N-terminal domain"/>
    <property type="match status" value="1"/>
</dbReference>
<dbReference type="InterPro" id="IPR008949">
    <property type="entry name" value="Isoprenoid_synthase_dom_sf"/>
</dbReference>
<dbReference type="InterPro" id="IPR001906">
    <property type="entry name" value="Terpene_synth_N"/>
</dbReference>
<dbReference type="InterPro" id="IPR036965">
    <property type="entry name" value="Terpene_synth_N_sf"/>
</dbReference>
<dbReference type="InterPro" id="IPR050148">
    <property type="entry name" value="Terpene_synthase-like"/>
</dbReference>
<dbReference type="InterPro" id="IPR005630">
    <property type="entry name" value="Terpene_synthase_metal-bd"/>
</dbReference>
<dbReference type="InterPro" id="IPR008930">
    <property type="entry name" value="Terpenoid_cyclase/PrenylTrfase"/>
</dbReference>
<dbReference type="PANTHER" id="PTHR31739:SF33">
    <property type="entry name" value="CIS-ABIENOL SYNTHASE, CHLOROPLASTIC"/>
    <property type="match status" value="1"/>
</dbReference>
<dbReference type="PANTHER" id="PTHR31739">
    <property type="entry name" value="ENT-COPALYL DIPHOSPHATE SYNTHASE, CHLOROPLASTIC"/>
    <property type="match status" value="1"/>
</dbReference>
<dbReference type="Pfam" id="PF01397">
    <property type="entry name" value="Terpene_synth"/>
    <property type="match status" value="1"/>
</dbReference>
<dbReference type="Pfam" id="PF03936">
    <property type="entry name" value="Terpene_synth_C"/>
    <property type="match status" value="1"/>
</dbReference>
<dbReference type="SFLD" id="SFLDG01014">
    <property type="entry name" value="Terpene_Cyclase_Like_1_N-term"/>
    <property type="match status" value="1"/>
</dbReference>
<dbReference type="SUPFAM" id="SSF48239">
    <property type="entry name" value="Terpenoid cyclases/Protein prenyltransferases"/>
    <property type="match status" value="2"/>
</dbReference>
<dbReference type="SUPFAM" id="SSF48576">
    <property type="entry name" value="Terpenoid synthases"/>
    <property type="match status" value="1"/>
</dbReference>